<sequence length="313" mass="34633">MHDTFKHTTVLLDEAVNGLNIKSDGIYIDGTFGRGGHSRLILSQLGEHGRLYAIDRDPQAIAAAAEITDPRFTIIHGPFSALAEYAEERGLKGKIDGILLDLGVSSPQLDDAERGFSFMRDGPLDMRMDPTRGQSAAEWLLKAEESDIAFVLKTFGEERFAKRIARAIVERNREQPMTRTKELADVIYAATPVKDKFKHPATRSFQAIRIWVNSELEEIEQALKGALSALTAGGRLSIISFHSLEDRIVKRFMREQSRGPQIPHGLPMTEAQLSSLGGRQLKALGKMMPGESEVADNPRARSSVLRIAERTAS</sequence>
<gene>
    <name evidence="1" type="primary">rsmH</name>
    <name type="synonym">mraW</name>
    <name type="ordered locus">ETA_07470</name>
</gene>
<reference key="1">
    <citation type="journal article" date="2008" name="Environ. Microbiol.">
        <title>The genome of Erwinia tasmaniensis strain Et1/99, a non-pathogenic bacterium in the genus Erwinia.</title>
        <authorList>
            <person name="Kube M."/>
            <person name="Migdoll A.M."/>
            <person name="Mueller I."/>
            <person name="Kuhl H."/>
            <person name="Beck A."/>
            <person name="Reinhardt R."/>
            <person name="Geider K."/>
        </authorList>
    </citation>
    <scope>NUCLEOTIDE SEQUENCE [LARGE SCALE GENOMIC DNA]</scope>
    <source>
        <strain>DSM 17950 / CFBP 7177 / CIP 109463 / NCPPB 4357 / Et1/99</strain>
    </source>
</reference>
<organism>
    <name type="scientific">Erwinia tasmaniensis (strain DSM 17950 / CFBP 7177 / CIP 109463 / NCPPB 4357 / Et1/99)</name>
    <dbReference type="NCBI Taxonomy" id="465817"/>
    <lineage>
        <taxon>Bacteria</taxon>
        <taxon>Pseudomonadati</taxon>
        <taxon>Pseudomonadota</taxon>
        <taxon>Gammaproteobacteria</taxon>
        <taxon>Enterobacterales</taxon>
        <taxon>Erwiniaceae</taxon>
        <taxon>Erwinia</taxon>
    </lineage>
</organism>
<comment type="function">
    <text evidence="1">Specifically methylates the N4 position of cytidine in position 1402 (C1402) of 16S rRNA.</text>
</comment>
<comment type="catalytic activity">
    <reaction evidence="1">
        <text>cytidine(1402) in 16S rRNA + S-adenosyl-L-methionine = N(4)-methylcytidine(1402) in 16S rRNA + S-adenosyl-L-homocysteine + H(+)</text>
        <dbReference type="Rhea" id="RHEA:42928"/>
        <dbReference type="Rhea" id="RHEA-COMP:10286"/>
        <dbReference type="Rhea" id="RHEA-COMP:10287"/>
        <dbReference type="ChEBI" id="CHEBI:15378"/>
        <dbReference type="ChEBI" id="CHEBI:57856"/>
        <dbReference type="ChEBI" id="CHEBI:59789"/>
        <dbReference type="ChEBI" id="CHEBI:74506"/>
        <dbReference type="ChEBI" id="CHEBI:82748"/>
        <dbReference type="EC" id="2.1.1.199"/>
    </reaction>
</comment>
<comment type="subcellular location">
    <subcellularLocation>
        <location evidence="1">Cytoplasm</location>
    </subcellularLocation>
</comment>
<comment type="similarity">
    <text evidence="1">Belongs to the methyltransferase superfamily. RsmH family.</text>
</comment>
<accession>B2VD83</accession>
<keyword id="KW-0963">Cytoplasm</keyword>
<keyword id="KW-0489">Methyltransferase</keyword>
<keyword id="KW-1185">Reference proteome</keyword>
<keyword id="KW-0698">rRNA processing</keyword>
<keyword id="KW-0949">S-adenosyl-L-methionine</keyword>
<keyword id="KW-0808">Transferase</keyword>
<name>RSMH_ERWT9</name>
<feature type="chain" id="PRO_0000386866" description="Ribosomal RNA small subunit methyltransferase H">
    <location>
        <begin position="1"/>
        <end position="313"/>
    </location>
</feature>
<feature type="binding site" evidence="1">
    <location>
        <begin position="35"/>
        <end position="37"/>
    </location>
    <ligand>
        <name>S-adenosyl-L-methionine</name>
        <dbReference type="ChEBI" id="CHEBI:59789"/>
    </ligand>
</feature>
<feature type="binding site" evidence="1">
    <location>
        <position position="55"/>
    </location>
    <ligand>
        <name>S-adenosyl-L-methionine</name>
        <dbReference type="ChEBI" id="CHEBI:59789"/>
    </ligand>
</feature>
<feature type="binding site" evidence="1">
    <location>
        <position position="79"/>
    </location>
    <ligand>
        <name>S-adenosyl-L-methionine</name>
        <dbReference type="ChEBI" id="CHEBI:59789"/>
    </ligand>
</feature>
<feature type="binding site" evidence="1">
    <location>
        <position position="101"/>
    </location>
    <ligand>
        <name>S-adenosyl-L-methionine</name>
        <dbReference type="ChEBI" id="CHEBI:59789"/>
    </ligand>
</feature>
<feature type="binding site" evidence="1">
    <location>
        <position position="108"/>
    </location>
    <ligand>
        <name>S-adenosyl-L-methionine</name>
        <dbReference type="ChEBI" id="CHEBI:59789"/>
    </ligand>
</feature>
<proteinExistence type="inferred from homology"/>
<protein>
    <recommendedName>
        <fullName evidence="1">Ribosomal RNA small subunit methyltransferase H</fullName>
        <ecNumber evidence="1">2.1.1.199</ecNumber>
    </recommendedName>
    <alternativeName>
        <fullName evidence="1">16S rRNA m(4)C1402 methyltransferase</fullName>
    </alternativeName>
    <alternativeName>
        <fullName evidence="1">rRNA (cytosine-N(4)-)-methyltransferase RsmH</fullName>
    </alternativeName>
</protein>
<dbReference type="EC" id="2.1.1.199" evidence="1"/>
<dbReference type="EMBL" id="CU468135">
    <property type="protein sequence ID" value="CAO95793.1"/>
    <property type="molecule type" value="Genomic_DNA"/>
</dbReference>
<dbReference type="RefSeq" id="WP_012440495.1">
    <property type="nucleotide sequence ID" value="NC_010694.1"/>
</dbReference>
<dbReference type="SMR" id="B2VD83"/>
<dbReference type="STRING" id="465817.ETA_07470"/>
<dbReference type="KEGG" id="eta:ETA_07470"/>
<dbReference type="eggNOG" id="COG0275">
    <property type="taxonomic scope" value="Bacteria"/>
</dbReference>
<dbReference type="HOGENOM" id="CLU_038422_2_0_6"/>
<dbReference type="OrthoDB" id="9806637at2"/>
<dbReference type="Proteomes" id="UP000001726">
    <property type="component" value="Chromosome"/>
</dbReference>
<dbReference type="GO" id="GO:0005737">
    <property type="term" value="C:cytoplasm"/>
    <property type="evidence" value="ECO:0007669"/>
    <property type="project" value="UniProtKB-SubCell"/>
</dbReference>
<dbReference type="GO" id="GO:0071424">
    <property type="term" value="F:rRNA (cytosine-N4-)-methyltransferase activity"/>
    <property type="evidence" value="ECO:0007669"/>
    <property type="project" value="UniProtKB-UniRule"/>
</dbReference>
<dbReference type="GO" id="GO:0070475">
    <property type="term" value="P:rRNA base methylation"/>
    <property type="evidence" value="ECO:0007669"/>
    <property type="project" value="UniProtKB-UniRule"/>
</dbReference>
<dbReference type="FunFam" id="1.10.150.170:FF:000001">
    <property type="entry name" value="Ribosomal RNA small subunit methyltransferase H"/>
    <property type="match status" value="1"/>
</dbReference>
<dbReference type="Gene3D" id="1.10.150.170">
    <property type="entry name" value="Putative methyltransferase TM0872, insert domain"/>
    <property type="match status" value="1"/>
</dbReference>
<dbReference type="Gene3D" id="3.40.50.150">
    <property type="entry name" value="Vaccinia Virus protein VP39"/>
    <property type="match status" value="1"/>
</dbReference>
<dbReference type="HAMAP" id="MF_01007">
    <property type="entry name" value="16SrRNA_methyltr_H"/>
    <property type="match status" value="1"/>
</dbReference>
<dbReference type="InterPro" id="IPR002903">
    <property type="entry name" value="RsmH"/>
</dbReference>
<dbReference type="InterPro" id="IPR023397">
    <property type="entry name" value="SAM-dep_MeTrfase_MraW_recog"/>
</dbReference>
<dbReference type="InterPro" id="IPR029063">
    <property type="entry name" value="SAM-dependent_MTases_sf"/>
</dbReference>
<dbReference type="NCBIfam" id="TIGR00006">
    <property type="entry name" value="16S rRNA (cytosine(1402)-N(4))-methyltransferase RsmH"/>
    <property type="match status" value="1"/>
</dbReference>
<dbReference type="PANTHER" id="PTHR11265:SF0">
    <property type="entry name" value="12S RRNA N4-METHYLCYTIDINE METHYLTRANSFERASE"/>
    <property type="match status" value="1"/>
</dbReference>
<dbReference type="PANTHER" id="PTHR11265">
    <property type="entry name" value="S-ADENOSYL-METHYLTRANSFERASE MRAW"/>
    <property type="match status" value="1"/>
</dbReference>
<dbReference type="Pfam" id="PF01795">
    <property type="entry name" value="Methyltransf_5"/>
    <property type="match status" value="1"/>
</dbReference>
<dbReference type="PIRSF" id="PIRSF004486">
    <property type="entry name" value="MraW"/>
    <property type="match status" value="1"/>
</dbReference>
<dbReference type="SUPFAM" id="SSF81799">
    <property type="entry name" value="Putative methyltransferase TM0872, insert domain"/>
    <property type="match status" value="1"/>
</dbReference>
<dbReference type="SUPFAM" id="SSF53335">
    <property type="entry name" value="S-adenosyl-L-methionine-dependent methyltransferases"/>
    <property type="match status" value="1"/>
</dbReference>
<evidence type="ECO:0000255" key="1">
    <source>
        <dbReference type="HAMAP-Rule" id="MF_01007"/>
    </source>
</evidence>